<gene>
    <name type="primary">dnaK</name>
</gene>
<proteinExistence type="inferred from homology"/>
<reference key="1">
    <citation type="submission" date="2006-04" db="EMBL/GenBank/DDBJ databases">
        <title>Cloning hsp70 from Porphyra haitanesis and Porphyra yezoensis.</title>
        <authorList>
            <person name="Xu L."/>
            <person name="Yang R."/>
            <person name="Sun X."/>
        </authorList>
    </citation>
    <scope>NUCLEOTIDE SEQUENCE [GENOMIC DNA]</scope>
</reference>
<name>DNAK_PYRHA</name>
<evidence type="ECO:0000250" key="1"/>
<evidence type="ECO:0000256" key="2">
    <source>
        <dbReference type="SAM" id="MobiDB-lite"/>
    </source>
</evidence>
<evidence type="ECO:0000305" key="3"/>
<feature type="chain" id="PRO_0000277263" description="Chaperone protein dnaK">
    <location>
        <begin position="1"/>
        <end position="621"/>
    </location>
</feature>
<feature type="region of interest" description="Disordered" evidence="2">
    <location>
        <begin position="598"/>
        <end position="621"/>
    </location>
</feature>
<protein>
    <recommendedName>
        <fullName>Chaperone protein dnaK</fullName>
    </recommendedName>
    <alternativeName>
        <fullName>HSP70</fullName>
    </alternativeName>
    <alternativeName>
        <fullName>Heat shock 70 kDa protein</fullName>
    </alternativeName>
    <alternativeName>
        <fullName>Heat shock protein 70</fullName>
    </alternativeName>
</protein>
<geneLocation type="chloroplast"/>
<sequence length="621" mass="67725">MGKVVGIDLGTTNSVIAVMEGGKPTVIPNAEGFRTTASVVAYTKSGDKLVGQIARRQAVINPENTFYSVKRFIGRKQNEISQEIRQTSYNVKTSGSSIKIACPALDKDFAPEEISAQVLRKLVEDASTYLGETVTQAVITVPAYFNDSQRQATKDAGKIAGLDVLRIINEPTAAPLSYGLDKQNNETILVFDLGGGTFDVSVLEVGDGVFEVLSTSGDTHLGGDDFDQQIVEWLIKDFKQNEGIDLAKDRQALQRLTEAAEKAKIELSNLTQTEINLPFITATQDGPKHLEKTVTRGKFEELCSNLIDKCSIPVNNALKDAKLEASSIDEVVLVGGSTRIPAIQQMVKRLIGKDPNQSVNPDEVVAIGAAVQAGVLAGEVKDILLLDVTPLSLGVETLGGVMTKIIPRNTTIPTKKSEVFSTAVDNQPNVEIQVLQGERELTKDNKSLGTFRLDGIMPAPRGVPQIEVTFDIDANGILSVKAKEKATGKEQSITISGASTLPKDDVERMVKEAEENFDTDQKRRKNIDTKNQAESLCYQAEKQIKEFEDKISQDLKTKIEELITELRSSLEKEEYENIESISQRLQNSLMDIGKMAAQAESKNTNTKDDGTVIDTDFSEAK</sequence>
<organism>
    <name type="scientific">Pyropia haitanensis</name>
    <name type="common">Red seaweed</name>
    <name type="synonym">Porphyra haitanensis</name>
    <dbReference type="NCBI Taxonomy" id="1262161"/>
    <lineage>
        <taxon>Eukaryota</taxon>
        <taxon>Rhodophyta</taxon>
        <taxon>Bangiophyceae</taxon>
        <taxon>Bangiales</taxon>
        <taxon>Bangiaceae</taxon>
        <taxon>Pyropia</taxon>
    </lineage>
</organism>
<keyword id="KW-0067">ATP-binding</keyword>
<keyword id="KW-0143">Chaperone</keyword>
<keyword id="KW-0150">Chloroplast</keyword>
<keyword id="KW-0547">Nucleotide-binding</keyword>
<keyword id="KW-0934">Plastid</keyword>
<dbReference type="EMBL" id="DQ480726">
    <property type="protein sequence ID" value="ABF20063.1"/>
    <property type="molecule type" value="Genomic_DNA"/>
</dbReference>
<dbReference type="SMR" id="Q06W39"/>
<dbReference type="GO" id="GO:0009507">
    <property type="term" value="C:chloroplast"/>
    <property type="evidence" value="ECO:0007669"/>
    <property type="project" value="UniProtKB-SubCell"/>
</dbReference>
<dbReference type="GO" id="GO:0005524">
    <property type="term" value="F:ATP binding"/>
    <property type="evidence" value="ECO:0007669"/>
    <property type="project" value="UniProtKB-UniRule"/>
</dbReference>
<dbReference type="GO" id="GO:0140662">
    <property type="term" value="F:ATP-dependent protein folding chaperone"/>
    <property type="evidence" value="ECO:0007669"/>
    <property type="project" value="InterPro"/>
</dbReference>
<dbReference type="GO" id="GO:0051082">
    <property type="term" value="F:unfolded protein binding"/>
    <property type="evidence" value="ECO:0007669"/>
    <property type="project" value="InterPro"/>
</dbReference>
<dbReference type="CDD" id="cd10234">
    <property type="entry name" value="ASKHA_NBD_HSP70_DnaK-like"/>
    <property type="match status" value="1"/>
</dbReference>
<dbReference type="FunFam" id="2.60.34.10:FF:000014">
    <property type="entry name" value="Chaperone protein DnaK HSP70"/>
    <property type="match status" value="1"/>
</dbReference>
<dbReference type="FunFam" id="1.20.1270.10:FF:000001">
    <property type="entry name" value="Molecular chaperone DnaK"/>
    <property type="match status" value="1"/>
</dbReference>
<dbReference type="FunFam" id="3.30.420.40:FF:000004">
    <property type="entry name" value="Molecular chaperone DnaK"/>
    <property type="match status" value="1"/>
</dbReference>
<dbReference type="FunFam" id="3.90.640.10:FF:000003">
    <property type="entry name" value="Molecular chaperone DnaK"/>
    <property type="match status" value="1"/>
</dbReference>
<dbReference type="Gene3D" id="1.20.1270.10">
    <property type="match status" value="1"/>
</dbReference>
<dbReference type="Gene3D" id="3.30.420.40">
    <property type="match status" value="2"/>
</dbReference>
<dbReference type="Gene3D" id="3.90.640.10">
    <property type="entry name" value="Actin, Chain A, domain 4"/>
    <property type="match status" value="1"/>
</dbReference>
<dbReference type="Gene3D" id="2.60.34.10">
    <property type="entry name" value="Substrate Binding Domain Of DNAk, Chain A, domain 1"/>
    <property type="match status" value="1"/>
</dbReference>
<dbReference type="HAMAP" id="MF_00332">
    <property type="entry name" value="DnaK"/>
    <property type="match status" value="1"/>
</dbReference>
<dbReference type="InterPro" id="IPR043129">
    <property type="entry name" value="ATPase_NBD"/>
</dbReference>
<dbReference type="InterPro" id="IPR012725">
    <property type="entry name" value="Chaperone_DnaK"/>
</dbReference>
<dbReference type="InterPro" id="IPR018181">
    <property type="entry name" value="Heat_shock_70_CS"/>
</dbReference>
<dbReference type="InterPro" id="IPR029048">
    <property type="entry name" value="HSP70_C_sf"/>
</dbReference>
<dbReference type="InterPro" id="IPR029047">
    <property type="entry name" value="HSP70_peptide-bd_sf"/>
</dbReference>
<dbReference type="InterPro" id="IPR013126">
    <property type="entry name" value="Hsp_70_fam"/>
</dbReference>
<dbReference type="NCBIfam" id="NF001413">
    <property type="entry name" value="PRK00290.1"/>
    <property type="match status" value="1"/>
</dbReference>
<dbReference type="NCBIfam" id="NF003520">
    <property type="entry name" value="PRK05183.1"/>
    <property type="match status" value="1"/>
</dbReference>
<dbReference type="NCBIfam" id="TIGR02350">
    <property type="entry name" value="prok_dnaK"/>
    <property type="match status" value="1"/>
</dbReference>
<dbReference type="PANTHER" id="PTHR19375">
    <property type="entry name" value="HEAT SHOCK PROTEIN 70KDA"/>
    <property type="match status" value="1"/>
</dbReference>
<dbReference type="Pfam" id="PF00012">
    <property type="entry name" value="HSP70"/>
    <property type="match status" value="1"/>
</dbReference>
<dbReference type="PRINTS" id="PR00301">
    <property type="entry name" value="HEATSHOCK70"/>
</dbReference>
<dbReference type="SUPFAM" id="SSF53067">
    <property type="entry name" value="Actin-like ATPase domain"/>
    <property type="match status" value="2"/>
</dbReference>
<dbReference type="SUPFAM" id="SSF100934">
    <property type="entry name" value="Heat shock protein 70kD (HSP70), C-terminal subdomain"/>
    <property type="match status" value="1"/>
</dbReference>
<dbReference type="SUPFAM" id="SSF100920">
    <property type="entry name" value="Heat shock protein 70kD (HSP70), peptide-binding domain"/>
    <property type="match status" value="1"/>
</dbReference>
<dbReference type="PROSITE" id="PS00297">
    <property type="entry name" value="HSP70_1"/>
    <property type="match status" value="1"/>
</dbReference>
<dbReference type="PROSITE" id="PS00329">
    <property type="entry name" value="HSP70_2"/>
    <property type="match status" value="1"/>
</dbReference>
<dbReference type="PROSITE" id="PS01036">
    <property type="entry name" value="HSP70_3"/>
    <property type="match status" value="1"/>
</dbReference>
<comment type="function">
    <text evidence="1">Acts as a chaperone.</text>
</comment>
<comment type="subcellular location">
    <subcellularLocation>
        <location>Plastid</location>
        <location>Chloroplast</location>
    </subcellularLocation>
</comment>
<comment type="similarity">
    <text evidence="3">Belongs to the heat shock protein 70 family.</text>
</comment>
<accession>Q06W39</accession>